<comment type="function">
    <text evidence="1">Catalyzes the ATP- as well as the pyrophosphate-dependent phosphorylation of a specific serine residue in HPr, a phosphocarrier protein of the phosphoenolpyruvate-dependent sugar phosphotransferase system (PTS). HprK/P also catalyzes the pyrophosphate-producing, inorganic phosphate-dependent dephosphorylation (phosphorolysis) of seryl-phosphorylated HPr (P-Ser-HPr).</text>
</comment>
<comment type="catalytic activity">
    <reaction evidence="1">
        <text>[HPr protein]-L-serine + ATP = [HPr protein]-O-phospho-L-serine + ADP + H(+)</text>
        <dbReference type="Rhea" id="RHEA:46600"/>
        <dbReference type="Rhea" id="RHEA-COMP:11602"/>
        <dbReference type="Rhea" id="RHEA-COMP:11603"/>
        <dbReference type="ChEBI" id="CHEBI:15378"/>
        <dbReference type="ChEBI" id="CHEBI:29999"/>
        <dbReference type="ChEBI" id="CHEBI:30616"/>
        <dbReference type="ChEBI" id="CHEBI:83421"/>
        <dbReference type="ChEBI" id="CHEBI:456216"/>
    </reaction>
</comment>
<comment type="catalytic activity">
    <reaction evidence="1">
        <text>[HPr protein]-O-phospho-L-serine + phosphate + H(+) = [HPr protein]-L-serine + diphosphate</text>
        <dbReference type="Rhea" id="RHEA:46604"/>
        <dbReference type="Rhea" id="RHEA-COMP:11602"/>
        <dbReference type="Rhea" id="RHEA-COMP:11603"/>
        <dbReference type="ChEBI" id="CHEBI:15378"/>
        <dbReference type="ChEBI" id="CHEBI:29999"/>
        <dbReference type="ChEBI" id="CHEBI:33019"/>
        <dbReference type="ChEBI" id="CHEBI:43474"/>
        <dbReference type="ChEBI" id="CHEBI:83421"/>
    </reaction>
</comment>
<comment type="cofactor">
    <cofactor evidence="1">
        <name>Mg(2+)</name>
        <dbReference type="ChEBI" id="CHEBI:18420"/>
    </cofactor>
</comment>
<comment type="subunit">
    <text evidence="1">Homohexamer.</text>
</comment>
<comment type="domain">
    <text evidence="1">The Walker A ATP-binding motif also binds Pi and PPi.</text>
</comment>
<comment type="miscellaneous">
    <text evidence="1">Both phosphorylation and phosphorolysis are carried out by the same active site and suggest a common mechanism for both reactions.</text>
</comment>
<comment type="similarity">
    <text evidence="1">Belongs to the HPrK/P family.</text>
</comment>
<keyword id="KW-0067">ATP-binding</keyword>
<keyword id="KW-0418">Kinase</keyword>
<keyword id="KW-0460">Magnesium</keyword>
<keyword id="KW-0479">Metal-binding</keyword>
<keyword id="KW-0511">Multifunctional enzyme</keyword>
<keyword id="KW-0547">Nucleotide-binding</keyword>
<keyword id="KW-0723">Serine/threonine-protein kinase</keyword>
<keyword id="KW-0808">Transferase</keyword>
<name>HPRK_BURCJ</name>
<feature type="chain" id="PRO_1000139890" description="HPr kinase/phosphorylase">
    <location>
        <begin position="1"/>
        <end position="322"/>
    </location>
</feature>
<feature type="region of interest" description="Important for the catalytic mechanism of both phosphorylation and dephosphorylation" evidence="1">
    <location>
        <begin position="209"/>
        <end position="218"/>
    </location>
</feature>
<feature type="region of interest" description="Important for the catalytic mechanism of dephosphorylation" evidence="1">
    <location>
        <begin position="271"/>
        <end position="276"/>
    </location>
</feature>
<feature type="active site" evidence="1">
    <location>
        <position position="146"/>
    </location>
</feature>
<feature type="active site" evidence="1">
    <location>
        <position position="167"/>
    </location>
</feature>
<feature type="active site" description="Proton acceptor; for phosphorylation activity. Proton donor; for dephosphorylation activity" evidence="1">
    <location>
        <position position="185"/>
    </location>
</feature>
<feature type="active site" evidence="1">
    <location>
        <position position="250"/>
    </location>
</feature>
<feature type="binding site" evidence="1">
    <location>
        <begin position="161"/>
        <end position="168"/>
    </location>
    <ligand>
        <name>ATP</name>
        <dbReference type="ChEBI" id="CHEBI:30616"/>
    </ligand>
</feature>
<feature type="binding site" evidence="1">
    <location>
        <position position="168"/>
    </location>
    <ligand>
        <name>Mg(2+)</name>
        <dbReference type="ChEBI" id="CHEBI:18420"/>
    </ligand>
</feature>
<feature type="binding site" evidence="1">
    <location>
        <position position="210"/>
    </location>
    <ligand>
        <name>Mg(2+)</name>
        <dbReference type="ChEBI" id="CHEBI:18420"/>
    </ligand>
</feature>
<sequence length="322" mass="35121">MDTSSINAQSIFDDNAATLKLSWLTGHEGWERGFSADTVGNATSSADLVGHLNLIHPNRIQVLGEAEIDYYQRQTDEDRSRHMAELIALEPPFLVVAGGAAAPPELVLRCTRSSTPLFTTPMSAAAVIDSLRLYMSRILAPRATLHGVFLDILGMGVLLTGDSGLGKSELGLELISRGHGLVADDAVDFVRLGPDFVEGRCPPLLQNLLEVRGLGLLDIKTIFGETAVRRKMKLKLIVQLVRRPDGEFQRLPLESQTVDVLGLPISKVTIQVAAGRNLAVLVEAAVRNTILQLRGIDTLRDFMDRQRLAMQDPDSQFPGKLV</sequence>
<reference key="1">
    <citation type="journal article" date="2009" name="J. Bacteriol.">
        <title>The genome of Burkholderia cenocepacia J2315, an epidemic pathogen of cystic fibrosis patients.</title>
        <authorList>
            <person name="Holden M.T."/>
            <person name="Seth-Smith H.M."/>
            <person name="Crossman L.C."/>
            <person name="Sebaihia M."/>
            <person name="Bentley S.D."/>
            <person name="Cerdeno-Tarraga A.M."/>
            <person name="Thomson N.R."/>
            <person name="Bason N."/>
            <person name="Quail M.A."/>
            <person name="Sharp S."/>
            <person name="Cherevach I."/>
            <person name="Churcher C."/>
            <person name="Goodhead I."/>
            <person name="Hauser H."/>
            <person name="Holroyd N."/>
            <person name="Mungall K."/>
            <person name="Scott P."/>
            <person name="Walker D."/>
            <person name="White B."/>
            <person name="Rose H."/>
            <person name="Iversen P."/>
            <person name="Mil-Homens D."/>
            <person name="Rocha E.P."/>
            <person name="Fialho A.M."/>
            <person name="Baldwin A."/>
            <person name="Dowson C."/>
            <person name="Barrell B.G."/>
            <person name="Govan J.R."/>
            <person name="Vandamme P."/>
            <person name="Hart C.A."/>
            <person name="Mahenthiralingam E."/>
            <person name="Parkhill J."/>
        </authorList>
    </citation>
    <scope>NUCLEOTIDE SEQUENCE [LARGE SCALE GENOMIC DNA]</scope>
    <source>
        <strain>ATCC BAA-245 / DSM 16553 / LMG 16656 / NCTC 13227 / J2315 / CF5610</strain>
    </source>
</reference>
<evidence type="ECO:0000255" key="1">
    <source>
        <dbReference type="HAMAP-Rule" id="MF_01249"/>
    </source>
</evidence>
<accession>B4EAS1</accession>
<gene>
    <name evidence="1" type="primary">hprK</name>
    <name type="ordered locus">BceJ2315_08010</name>
    <name type="ORF">BCAL0809</name>
</gene>
<proteinExistence type="inferred from homology"/>
<organism>
    <name type="scientific">Burkholderia cenocepacia (strain ATCC BAA-245 / DSM 16553 / LMG 16656 / NCTC 13227 / J2315 / CF5610)</name>
    <name type="common">Burkholderia cepacia (strain J2315)</name>
    <dbReference type="NCBI Taxonomy" id="216591"/>
    <lineage>
        <taxon>Bacteria</taxon>
        <taxon>Pseudomonadati</taxon>
        <taxon>Pseudomonadota</taxon>
        <taxon>Betaproteobacteria</taxon>
        <taxon>Burkholderiales</taxon>
        <taxon>Burkholderiaceae</taxon>
        <taxon>Burkholderia</taxon>
        <taxon>Burkholderia cepacia complex</taxon>
    </lineage>
</organism>
<protein>
    <recommendedName>
        <fullName evidence="1">HPr kinase/phosphorylase</fullName>
        <shortName evidence="1">HPrK/P</shortName>
        <ecNumber evidence="1">2.7.11.-</ecNumber>
        <ecNumber evidence="1">2.7.4.-</ecNumber>
    </recommendedName>
    <alternativeName>
        <fullName evidence="1">HPr(Ser) kinase/phosphorylase</fullName>
    </alternativeName>
</protein>
<dbReference type="EC" id="2.7.11.-" evidence="1"/>
<dbReference type="EC" id="2.7.4.-" evidence="1"/>
<dbReference type="EMBL" id="AM747720">
    <property type="protein sequence ID" value="CAR51116.1"/>
    <property type="molecule type" value="Genomic_DNA"/>
</dbReference>
<dbReference type="RefSeq" id="WP_006483133.1">
    <property type="nucleotide sequence ID" value="NC_011000.1"/>
</dbReference>
<dbReference type="SMR" id="B4EAS1"/>
<dbReference type="GeneID" id="98103899"/>
<dbReference type="KEGG" id="bcj:BCAL0809"/>
<dbReference type="eggNOG" id="COG1493">
    <property type="taxonomic scope" value="Bacteria"/>
</dbReference>
<dbReference type="HOGENOM" id="CLU_052030_0_2_4"/>
<dbReference type="BioCyc" id="BCEN216591:G1G1V-903-MONOMER"/>
<dbReference type="Proteomes" id="UP000001035">
    <property type="component" value="Chromosome 1"/>
</dbReference>
<dbReference type="GO" id="GO:0005524">
    <property type="term" value="F:ATP binding"/>
    <property type="evidence" value="ECO:0007669"/>
    <property type="project" value="UniProtKB-UniRule"/>
</dbReference>
<dbReference type="GO" id="GO:0000287">
    <property type="term" value="F:magnesium ion binding"/>
    <property type="evidence" value="ECO:0007669"/>
    <property type="project" value="UniProtKB-UniRule"/>
</dbReference>
<dbReference type="GO" id="GO:0000155">
    <property type="term" value="F:phosphorelay sensor kinase activity"/>
    <property type="evidence" value="ECO:0007669"/>
    <property type="project" value="InterPro"/>
</dbReference>
<dbReference type="GO" id="GO:0004674">
    <property type="term" value="F:protein serine/threonine kinase activity"/>
    <property type="evidence" value="ECO:0007669"/>
    <property type="project" value="UniProtKB-KW"/>
</dbReference>
<dbReference type="GO" id="GO:0004712">
    <property type="term" value="F:protein serine/threonine/tyrosine kinase activity"/>
    <property type="evidence" value="ECO:0007669"/>
    <property type="project" value="UniProtKB-UniRule"/>
</dbReference>
<dbReference type="GO" id="GO:0006109">
    <property type="term" value="P:regulation of carbohydrate metabolic process"/>
    <property type="evidence" value="ECO:0007669"/>
    <property type="project" value="UniProtKB-UniRule"/>
</dbReference>
<dbReference type="CDD" id="cd01918">
    <property type="entry name" value="HprK_C"/>
    <property type="match status" value="1"/>
</dbReference>
<dbReference type="FunFam" id="3.40.50.300:FF:000174">
    <property type="entry name" value="HPr kinase/phosphorylase"/>
    <property type="match status" value="1"/>
</dbReference>
<dbReference type="Gene3D" id="3.40.1390.20">
    <property type="entry name" value="HprK N-terminal domain-like"/>
    <property type="match status" value="1"/>
</dbReference>
<dbReference type="Gene3D" id="3.40.50.300">
    <property type="entry name" value="P-loop containing nucleotide triphosphate hydrolases"/>
    <property type="match status" value="1"/>
</dbReference>
<dbReference type="HAMAP" id="MF_01249">
    <property type="entry name" value="HPr_kinase"/>
    <property type="match status" value="1"/>
</dbReference>
<dbReference type="InterPro" id="IPR003755">
    <property type="entry name" value="HPr(Ser)_kin/Pase"/>
</dbReference>
<dbReference type="InterPro" id="IPR011104">
    <property type="entry name" value="Hpr_kin/Pase_C"/>
</dbReference>
<dbReference type="InterPro" id="IPR011126">
    <property type="entry name" value="Hpr_kin/Pase_Hpr_N"/>
</dbReference>
<dbReference type="InterPro" id="IPR027417">
    <property type="entry name" value="P-loop_NTPase"/>
</dbReference>
<dbReference type="InterPro" id="IPR028979">
    <property type="entry name" value="Ser_kin/Pase_Hpr-like_N_sf"/>
</dbReference>
<dbReference type="NCBIfam" id="TIGR00679">
    <property type="entry name" value="hpr-ser"/>
    <property type="match status" value="1"/>
</dbReference>
<dbReference type="PANTHER" id="PTHR30305:SF1">
    <property type="entry name" value="HPR KINASE_PHOSPHORYLASE"/>
    <property type="match status" value="1"/>
</dbReference>
<dbReference type="PANTHER" id="PTHR30305">
    <property type="entry name" value="PROTEIN YJDM-RELATED"/>
    <property type="match status" value="1"/>
</dbReference>
<dbReference type="Pfam" id="PF07475">
    <property type="entry name" value="Hpr_kinase_C"/>
    <property type="match status" value="1"/>
</dbReference>
<dbReference type="Pfam" id="PF02603">
    <property type="entry name" value="Hpr_kinase_N"/>
    <property type="match status" value="1"/>
</dbReference>
<dbReference type="SUPFAM" id="SSF75138">
    <property type="entry name" value="HprK N-terminal domain-like"/>
    <property type="match status" value="1"/>
</dbReference>
<dbReference type="SUPFAM" id="SSF53795">
    <property type="entry name" value="PEP carboxykinase-like"/>
    <property type="match status" value="1"/>
</dbReference>